<reference key="1">
    <citation type="journal article" date="2009" name="PLoS Genet.">
        <title>Organised genome dynamics in the Escherichia coli species results in highly diverse adaptive paths.</title>
        <authorList>
            <person name="Touchon M."/>
            <person name="Hoede C."/>
            <person name="Tenaillon O."/>
            <person name="Barbe V."/>
            <person name="Baeriswyl S."/>
            <person name="Bidet P."/>
            <person name="Bingen E."/>
            <person name="Bonacorsi S."/>
            <person name="Bouchier C."/>
            <person name="Bouvet O."/>
            <person name="Calteau A."/>
            <person name="Chiapello H."/>
            <person name="Clermont O."/>
            <person name="Cruveiller S."/>
            <person name="Danchin A."/>
            <person name="Diard M."/>
            <person name="Dossat C."/>
            <person name="Karoui M.E."/>
            <person name="Frapy E."/>
            <person name="Garry L."/>
            <person name="Ghigo J.M."/>
            <person name="Gilles A.M."/>
            <person name="Johnson J."/>
            <person name="Le Bouguenec C."/>
            <person name="Lescat M."/>
            <person name="Mangenot S."/>
            <person name="Martinez-Jehanne V."/>
            <person name="Matic I."/>
            <person name="Nassif X."/>
            <person name="Oztas S."/>
            <person name="Petit M.A."/>
            <person name="Pichon C."/>
            <person name="Rouy Z."/>
            <person name="Ruf C.S."/>
            <person name="Schneider D."/>
            <person name="Tourret J."/>
            <person name="Vacherie B."/>
            <person name="Vallenet D."/>
            <person name="Medigue C."/>
            <person name="Rocha E.P.C."/>
            <person name="Denamur E."/>
        </authorList>
    </citation>
    <scope>NUCLEOTIDE SEQUENCE [LARGE SCALE GENOMIC DNA]</scope>
    <source>
        <strain>UMN026 / ExPEC</strain>
    </source>
</reference>
<comment type="function">
    <text evidence="1">Catalyzes the conversion of 1-hydroxy-2-methyl-2-(E)-butenyl 4-diphosphate (HMBPP) into a mixture of isopentenyl diphosphate (IPP) and dimethylallyl diphosphate (DMAPP). Acts in the terminal step of the DOXP/MEP pathway for isoprenoid precursor biosynthesis.</text>
</comment>
<comment type="catalytic activity">
    <reaction evidence="1">
        <text>isopentenyl diphosphate + 2 oxidized [2Fe-2S]-[ferredoxin] + H2O = (2E)-4-hydroxy-3-methylbut-2-enyl diphosphate + 2 reduced [2Fe-2S]-[ferredoxin] + 2 H(+)</text>
        <dbReference type="Rhea" id="RHEA:24488"/>
        <dbReference type="Rhea" id="RHEA-COMP:10000"/>
        <dbReference type="Rhea" id="RHEA-COMP:10001"/>
        <dbReference type="ChEBI" id="CHEBI:15377"/>
        <dbReference type="ChEBI" id="CHEBI:15378"/>
        <dbReference type="ChEBI" id="CHEBI:33737"/>
        <dbReference type="ChEBI" id="CHEBI:33738"/>
        <dbReference type="ChEBI" id="CHEBI:128753"/>
        <dbReference type="ChEBI" id="CHEBI:128769"/>
        <dbReference type="EC" id="1.17.7.4"/>
    </reaction>
</comment>
<comment type="catalytic activity">
    <reaction evidence="1">
        <text>dimethylallyl diphosphate + 2 oxidized [2Fe-2S]-[ferredoxin] + H2O = (2E)-4-hydroxy-3-methylbut-2-enyl diphosphate + 2 reduced [2Fe-2S]-[ferredoxin] + 2 H(+)</text>
        <dbReference type="Rhea" id="RHEA:24825"/>
        <dbReference type="Rhea" id="RHEA-COMP:10000"/>
        <dbReference type="Rhea" id="RHEA-COMP:10001"/>
        <dbReference type="ChEBI" id="CHEBI:15377"/>
        <dbReference type="ChEBI" id="CHEBI:15378"/>
        <dbReference type="ChEBI" id="CHEBI:33737"/>
        <dbReference type="ChEBI" id="CHEBI:33738"/>
        <dbReference type="ChEBI" id="CHEBI:57623"/>
        <dbReference type="ChEBI" id="CHEBI:128753"/>
        <dbReference type="EC" id="1.17.7.4"/>
    </reaction>
</comment>
<comment type="cofactor">
    <cofactor evidence="1">
        <name>[4Fe-4S] cluster</name>
        <dbReference type="ChEBI" id="CHEBI:49883"/>
    </cofactor>
    <text evidence="1">Binds 1 [4Fe-4S] cluster per subunit.</text>
</comment>
<comment type="pathway">
    <text evidence="1">Isoprenoid biosynthesis; dimethylallyl diphosphate biosynthesis; dimethylallyl diphosphate from (2E)-4-hydroxy-3-methylbutenyl diphosphate: step 1/1.</text>
</comment>
<comment type="pathway">
    <text evidence="1">Isoprenoid biosynthesis; isopentenyl diphosphate biosynthesis via DXP pathway; isopentenyl diphosphate from 1-deoxy-D-xylulose 5-phosphate: step 6/6.</text>
</comment>
<comment type="subunit">
    <text evidence="1">Homodimer.</text>
</comment>
<comment type="similarity">
    <text evidence="1">Belongs to the IspH family.</text>
</comment>
<name>ISPH_ECOLU</name>
<feature type="chain" id="PRO_1000118609" description="4-hydroxy-3-methylbut-2-enyl diphosphate reductase">
    <location>
        <begin position="1"/>
        <end position="316"/>
    </location>
</feature>
<feature type="active site" description="Proton donor" evidence="1">
    <location>
        <position position="126"/>
    </location>
</feature>
<feature type="binding site" evidence="1">
    <location>
        <position position="12"/>
    </location>
    <ligand>
        <name>[4Fe-4S] cluster</name>
        <dbReference type="ChEBI" id="CHEBI:49883"/>
    </ligand>
</feature>
<feature type="binding site" evidence="1">
    <location>
        <position position="41"/>
    </location>
    <ligand>
        <name>(2E)-4-hydroxy-3-methylbut-2-enyl diphosphate</name>
        <dbReference type="ChEBI" id="CHEBI:128753"/>
    </ligand>
</feature>
<feature type="binding site" evidence="1">
    <location>
        <position position="41"/>
    </location>
    <ligand>
        <name>dimethylallyl diphosphate</name>
        <dbReference type="ChEBI" id="CHEBI:57623"/>
    </ligand>
</feature>
<feature type="binding site" evidence="1">
    <location>
        <position position="41"/>
    </location>
    <ligand>
        <name>isopentenyl diphosphate</name>
        <dbReference type="ChEBI" id="CHEBI:128769"/>
    </ligand>
</feature>
<feature type="binding site" evidence="1">
    <location>
        <position position="74"/>
    </location>
    <ligand>
        <name>(2E)-4-hydroxy-3-methylbut-2-enyl diphosphate</name>
        <dbReference type="ChEBI" id="CHEBI:128753"/>
    </ligand>
</feature>
<feature type="binding site" evidence="1">
    <location>
        <position position="74"/>
    </location>
    <ligand>
        <name>dimethylallyl diphosphate</name>
        <dbReference type="ChEBI" id="CHEBI:57623"/>
    </ligand>
</feature>
<feature type="binding site" evidence="1">
    <location>
        <position position="74"/>
    </location>
    <ligand>
        <name>isopentenyl diphosphate</name>
        <dbReference type="ChEBI" id="CHEBI:128769"/>
    </ligand>
</feature>
<feature type="binding site" evidence="1">
    <location>
        <position position="96"/>
    </location>
    <ligand>
        <name>[4Fe-4S] cluster</name>
        <dbReference type="ChEBI" id="CHEBI:49883"/>
    </ligand>
</feature>
<feature type="binding site" evidence="1">
    <location>
        <position position="124"/>
    </location>
    <ligand>
        <name>(2E)-4-hydroxy-3-methylbut-2-enyl diphosphate</name>
        <dbReference type="ChEBI" id="CHEBI:128753"/>
    </ligand>
</feature>
<feature type="binding site" evidence="1">
    <location>
        <position position="124"/>
    </location>
    <ligand>
        <name>dimethylallyl diphosphate</name>
        <dbReference type="ChEBI" id="CHEBI:57623"/>
    </ligand>
</feature>
<feature type="binding site" evidence="1">
    <location>
        <position position="124"/>
    </location>
    <ligand>
        <name>isopentenyl diphosphate</name>
        <dbReference type="ChEBI" id="CHEBI:128769"/>
    </ligand>
</feature>
<feature type="binding site" evidence="1">
    <location>
        <position position="167"/>
    </location>
    <ligand>
        <name>(2E)-4-hydroxy-3-methylbut-2-enyl diphosphate</name>
        <dbReference type="ChEBI" id="CHEBI:128753"/>
    </ligand>
</feature>
<feature type="binding site" evidence="1">
    <location>
        <position position="197"/>
    </location>
    <ligand>
        <name>[4Fe-4S] cluster</name>
        <dbReference type="ChEBI" id="CHEBI:49883"/>
    </ligand>
</feature>
<feature type="binding site" evidence="1">
    <location>
        <position position="225"/>
    </location>
    <ligand>
        <name>(2E)-4-hydroxy-3-methylbut-2-enyl diphosphate</name>
        <dbReference type="ChEBI" id="CHEBI:128753"/>
    </ligand>
</feature>
<feature type="binding site" evidence="1">
    <location>
        <position position="225"/>
    </location>
    <ligand>
        <name>dimethylallyl diphosphate</name>
        <dbReference type="ChEBI" id="CHEBI:57623"/>
    </ligand>
</feature>
<feature type="binding site" evidence="1">
    <location>
        <position position="225"/>
    </location>
    <ligand>
        <name>isopentenyl diphosphate</name>
        <dbReference type="ChEBI" id="CHEBI:128769"/>
    </ligand>
</feature>
<feature type="binding site" evidence="1">
    <location>
        <position position="226"/>
    </location>
    <ligand>
        <name>(2E)-4-hydroxy-3-methylbut-2-enyl diphosphate</name>
        <dbReference type="ChEBI" id="CHEBI:128753"/>
    </ligand>
</feature>
<feature type="binding site" evidence="1">
    <location>
        <position position="226"/>
    </location>
    <ligand>
        <name>dimethylallyl diphosphate</name>
        <dbReference type="ChEBI" id="CHEBI:57623"/>
    </ligand>
</feature>
<feature type="binding site" evidence="1">
    <location>
        <position position="226"/>
    </location>
    <ligand>
        <name>isopentenyl diphosphate</name>
        <dbReference type="ChEBI" id="CHEBI:128769"/>
    </ligand>
</feature>
<feature type="binding site" evidence="1">
    <location>
        <position position="227"/>
    </location>
    <ligand>
        <name>(2E)-4-hydroxy-3-methylbut-2-enyl diphosphate</name>
        <dbReference type="ChEBI" id="CHEBI:128753"/>
    </ligand>
</feature>
<feature type="binding site" evidence="1">
    <location>
        <position position="227"/>
    </location>
    <ligand>
        <name>dimethylallyl diphosphate</name>
        <dbReference type="ChEBI" id="CHEBI:57623"/>
    </ligand>
</feature>
<feature type="binding site" evidence="1">
    <location>
        <position position="227"/>
    </location>
    <ligand>
        <name>isopentenyl diphosphate</name>
        <dbReference type="ChEBI" id="CHEBI:128769"/>
    </ligand>
</feature>
<feature type="binding site" evidence="1">
    <location>
        <position position="269"/>
    </location>
    <ligand>
        <name>(2E)-4-hydroxy-3-methylbut-2-enyl diphosphate</name>
        <dbReference type="ChEBI" id="CHEBI:128753"/>
    </ligand>
</feature>
<feature type="binding site" evidence="1">
    <location>
        <position position="269"/>
    </location>
    <ligand>
        <name>dimethylallyl diphosphate</name>
        <dbReference type="ChEBI" id="CHEBI:57623"/>
    </ligand>
</feature>
<feature type="binding site" evidence="1">
    <location>
        <position position="269"/>
    </location>
    <ligand>
        <name>isopentenyl diphosphate</name>
        <dbReference type="ChEBI" id="CHEBI:128769"/>
    </ligand>
</feature>
<gene>
    <name evidence="1" type="primary">ispH</name>
    <name type="ordered locus">ECUMN_0030</name>
</gene>
<dbReference type="EC" id="1.17.7.4" evidence="1"/>
<dbReference type="EMBL" id="CU928163">
    <property type="protein sequence ID" value="CAR11253.1"/>
    <property type="molecule type" value="Genomic_DNA"/>
</dbReference>
<dbReference type="RefSeq" id="WP_001166395.1">
    <property type="nucleotide sequence ID" value="NC_011751.1"/>
</dbReference>
<dbReference type="RefSeq" id="YP_002410808.1">
    <property type="nucleotide sequence ID" value="NC_011751.1"/>
</dbReference>
<dbReference type="SMR" id="B7N7Q3"/>
<dbReference type="STRING" id="585056.ECUMN_0030"/>
<dbReference type="GeneID" id="93777407"/>
<dbReference type="KEGG" id="eum:ECUMN_0030"/>
<dbReference type="PATRIC" id="fig|585056.7.peg.213"/>
<dbReference type="HOGENOM" id="CLU_027486_1_0_6"/>
<dbReference type="UniPathway" id="UPA00056">
    <property type="reaction ID" value="UER00097"/>
</dbReference>
<dbReference type="UniPathway" id="UPA00059">
    <property type="reaction ID" value="UER00105"/>
</dbReference>
<dbReference type="Proteomes" id="UP000007097">
    <property type="component" value="Chromosome"/>
</dbReference>
<dbReference type="GO" id="GO:0051539">
    <property type="term" value="F:4 iron, 4 sulfur cluster binding"/>
    <property type="evidence" value="ECO:0007669"/>
    <property type="project" value="UniProtKB-UniRule"/>
</dbReference>
<dbReference type="GO" id="GO:0051745">
    <property type="term" value="F:4-hydroxy-3-methylbut-2-enyl diphosphate reductase activity"/>
    <property type="evidence" value="ECO:0007669"/>
    <property type="project" value="UniProtKB-UniRule"/>
</dbReference>
<dbReference type="GO" id="GO:0046872">
    <property type="term" value="F:metal ion binding"/>
    <property type="evidence" value="ECO:0007669"/>
    <property type="project" value="UniProtKB-KW"/>
</dbReference>
<dbReference type="GO" id="GO:0050992">
    <property type="term" value="P:dimethylallyl diphosphate biosynthetic process"/>
    <property type="evidence" value="ECO:0007669"/>
    <property type="project" value="UniProtKB-UniRule"/>
</dbReference>
<dbReference type="GO" id="GO:0019288">
    <property type="term" value="P:isopentenyl diphosphate biosynthetic process, methylerythritol 4-phosphate pathway"/>
    <property type="evidence" value="ECO:0007669"/>
    <property type="project" value="UniProtKB-UniRule"/>
</dbReference>
<dbReference type="GO" id="GO:0016114">
    <property type="term" value="P:terpenoid biosynthetic process"/>
    <property type="evidence" value="ECO:0007669"/>
    <property type="project" value="UniProtKB-UniRule"/>
</dbReference>
<dbReference type="CDD" id="cd13944">
    <property type="entry name" value="lytB_ispH"/>
    <property type="match status" value="1"/>
</dbReference>
<dbReference type="FunFam" id="3.40.1010.20:FF:000001">
    <property type="entry name" value="4-hydroxy-3-methylbut-2-enyl diphosphate reductase"/>
    <property type="match status" value="1"/>
</dbReference>
<dbReference type="FunFam" id="3.40.50.11270:FF:000001">
    <property type="entry name" value="4-hydroxy-3-methylbut-2-enyl diphosphate reductase"/>
    <property type="match status" value="1"/>
</dbReference>
<dbReference type="Gene3D" id="3.40.50.11270">
    <property type="match status" value="1"/>
</dbReference>
<dbReference type="Gene3D" id="3.40.1010.20">
    <property type="entry name" value="4-hydroxy-3-methylbut-2-enyl diphosphate reductase, catalytic domain"/>
    <property type="match status" value="2"/>
</dbReference>
<dbReference type="HAMAP" id="MF_00191">
    <property type="entry name" value="IspH"/>
    <property type="match status" value="1"/>
</dbReference>
<dbReference type="InterPro" id="IPR003451">
    <property type="entry name" value="LytB/IspH"/>
</dbReference>
<dbReference type="NCBIfam" id="TIGR00216">
    <property type="entry name" value="ispH_lytB"/>
    <property type="match status" value="1"/>
</dbReference>
<dbReference type="NCBIfam" id="NF002188">
    <property type="entry name" value="PRK01045.1-2"/>
    <property type="match status" value="1"/>
</dbReference>
<dbReference type="NCBIfam" id="NF002190">
    <property type="entry name" value="PRK01045.1-4"/>
    <property type="match status" value="1"/>
</dbReference>
<dbReference type="PANTHER" id="PTHR30426">
    <property type="entry name" value="4-HYDROXY-3-METHYLBUT-2-ENYL DIPHOSPHATE REDUCTASE"/>
    <property type="match status" value="1"/>
</dbReference>
<dbReference type="PANTHER" id="PTHR30426:SF0">
    <property type="entry name" value="4-HYDROXY-3-METHYLBUT-2-ENYL DIPHOSPHATE REDUCTASE"/>
    <property type="match status" value="1"/>
</dbReference>
<dbReference type="Pfam" id="PF02401">
    <property type="entry name" value="LYTB"/>
    <property type="match status" value="1"/>
</dbReference>
<keyword id="KW-0004">4Fe-4S</keyword>
<keyword id="KW-0408">Iron</keyword>
<keyword id="KW-0411">Iron-sulfur</keyword>
<keyword id="KW-0414">Isoprene biosynthesis</keyword>
<keyword id="KW-0479">Metal-binding</keyword>
<keyword id="KW-0560">Oxidoreductase</keyword>
<accession>B7N7Q3</accession>
<evidence type="ECO:0000255" key="1">
    <source>
        <dbReference type="HAMAP-Rule" id="MF_00191"/>
    </source>
</evidence>
<sequence>MQILLANPRGFCAGVDRAISIVENALAIYGAPIYVRHEVVHNRYVVDSLRERGAIFIEQISEVPDGAILIFSAHGVSQAVRNEAKSRDLTVFDATCPLVTKVHMEVARASRRGEESILIGHAGHPEVEGTMGQYSNPEGGMYLVESPDDVWKLTVKNEEKLSFMTQTTLSVDDTSDVIDALRKRFPKIVGPRKDDICYATTNRQEAVRALAEQAEVVLVVGSKNSSNSNRLAELAQRMGKRAFLIDDAKDIQEEWVKEVKCVGVTAGASAPDILVQNVVARLQQLGGGEAIPLEGREENIVFEVPKELRVDIREVD</sequence>
<proteinExistence type="inferred from homology"/>
<organism>
    <name type="scientific">Escherichia coli O17:K52:H18 (strain UMN026 / ExPEC)</name>
    <dbReference type="NCBI Taxonomy" id="585056"/>
    <lineage>
        <taxon>Bacteria</taxon>
        <taxon>Pseudomonadati</taxon>
        <taxon>Pseudomonadota</taxon>
        <taxon>Gammaproteobacteria</taxon>
        <taxon>Enterobacterales</taxon>
        <taxon>Enterobacteriaceae</taxon>
        <taxon>Escherichia</taxon>
    </lineage>
</organism>
<protein>
    <recommendedName>
        <fullName evidence="1">4-hydroxy-3-methylbut-2-enyl diphosphate reductase</fullName>
        <shortName evidence="1">HMBPP reductase</shortName>
        <ecNumber evidence="1">1.17.7.4</ecNumber>
    </recommendedName>
</protein>